<name>LACB2_STRP3</name>
<feature type="chain" id="PRO_0000208160" description="Galactose-6-phosphate isomerase subunit LacB 2">
    <location>
        <begin position="1"/>
        <end position="171"/>
    </location>
</feature>
<organism>
    <name type="scientific">Streptococcus pyogenes serotype M3 (strain ATCC BAA-595 / MGAS315)</name>
    <dbReference type="NCBI Taxonomy" id="198466"/>
    <lineage>
        <taxon>Bacteria</taxon>
        <taxon>Bacillati</taxon>
        <taxon>Bacillota</taxon>
        <taxon>Bacilli</taxon>
        <taxon>Lactobacillales</taxon>
        <taxon>Streptococcaceae</taxon>
        <taxon>Streptococcus</taxon>
    </lineage>
</organism>
<accession>P0DC10</accession>
<accession>Q79W96</accession>
<accession>Q8K5U7</accession>
<evidence type="ECO:0000255" key="1">
    <source>
        <dbReference type="HAMAP-Rule" id="MF_01556"/>
    </source>
</evidence>
<dbReference type="EC" id="5.3.1.26" evidence="1"/>
<dbReference type="EMBL" id="AE014074">
    <property type="protein sequence ID" value="AAM80265.1"/>
    <property type="molecule type" value="Genomic_DNA"/>
</dbReference>
<dbReference type="SMR" id="P0DC10"/>
<dbReference type="KEGG" id="spg:SpyM3_1658"/>
<dbReference type="HOGENOM" id="CLU_091396_2_0_9"/>
<dbReference type="UniPathway" id="UPA00702">
    <property type="reaction ID" value="UER00714"/>
</dbReference>
<dbReference type="Proteomes" id="UP000000564">
    <property type="component" value="Chromosome"/>
</dbReference>
<dbReference type="GO" id="GO:0050044">
    <property type="term" value="F:galactose-6-phosphate isomerase activity"/>
    <property type="evidence" value="ECO:0007669"/>
    <property type="project" value="UniProtKB-UniRule"/>
</dbReference>
<dbReference type="GO" id="GO:0004751">
    <property type="term" value="F:ribose-5-phosphate isomerase activity"/>
    <property type="evidence" value="ECO:0007669"/>
    <property type="project" value="TreeGrafter"/>
</dbReference>
<dbReference type="GO" id="GO:0019316">
    <property type="term" value="P:D-allose catabolic process"/>
    <property type="evidence" value="ECO:0007669"/>
    <property type="project" value="TreeGrafter"/>
</dbReference>
<dbReference type="GO" id="GO:0019388">
    <property type="term" value="P:galactose catabolic process"/>
    <property type="evidence" value="ECO:0007669"/>
    <property type="project" value="UniProtKB-UniPathway"/>
</dbReference>
<dbReference type="GO" id="GO:0019512">
    <property type="term" value="P:lactose catabolic process via tagatose-6-phosphate"/>
    <property type="evidence" value="ECO:0007669"/>
    <property type="project" value="UniProtKB-UniRule"/>
</dbReference>
<dbReference type="GO" id="GO:0009052">
    <property type="term" value="P:pentose-phosphate shunt, non-oxidative branch"/>
    <property type="evidence" value="ECO:0007669"/>
    <property type="project" value="TreeGrafter"/>
</dbReference>
<dbReference type="Gene3D" id="3.40.1400.10">
    <property type="entry name" value="Sugar-phosphate isomerase, RpiB/LacA/LacB"/>
    <property type="match status" value="1"/>
</dbReference>
<dbReference type="HAMAP" id="MF_01556">
    <property type="entry name" value="LacB"/>
    <property type="match status" value="1"/>
</dbReference>
<dbReference type="InterPro" id="IPR004784">
    <property type="entry name" value="LacB"/>
</dbReference>
<dbReference type="InterPro" id="IPR003500">
    <property type="entry name" value="RpiB_LacA_LacB"/>
</dbReference>
<dbReference type="InterPro" id="IPR036569">
    <property type="entry name" value="RpiB_LacA_LacB_sf"/>
</dbReference>
<dbReference type="NCBIfam" id="NF004051">
    <property type="entry name" value="PRK05571.1"/>
    <property type="match status" value="1"/>
</dbReference>
<dbReference type="NCBIfam" id="NF006381">
    <property type="entry name" value="PRK08622.1"/>
    <property type="match status" value="1"/>
</dbReference>
<dbReference type="NCBIfam" id="TIGR00689">
    <property type="entry name" value="rpiB_lacA_lacB"/>
    <property type="match status" value="1"/>
</dbReference>
<dbReference type="PANTHER" id="PTHR30345:SF0">
    <property type="entry name" value="DNA DAMAGE-REPAIR_TOLERATION PROTEIN DRT102"/>
    <property type="match status" value="1"/>
</dbReference>
<dbReference type="PANTHER" id="PTHR30345">
    <property type="entry name" value="RIBOSE-5-PHOSPHATE ISOMERASE B"/>
    <property type="match status" value="1"/>
</dbReference>
<dbReference type="Pfam" id="PF02502">
    <property type="entry name" value="LacAB_rpiB"/>
    <property type="match status" value="1"/>
</dbReference>
<dbReference type="PIRSF" id="PIRSF005384">
    <property type="entry name" value="RpiB_LacA_B"/>
    <property type="match status" value="1"/>
</dbReference>
<dbReference type="SUPFAM" id="SSF89623">
    <property type="entry name" value="Ribose/Galactose isomerase RpiB/AlsB"/>
    <property type="match status" value="1"/>
</dbReference>
<gene>
    <name evidence="1" type="primary">lacB2</name>
    <name type="synonym">lacB.2</name>
    <name type="ordered locus">SpyM3_1658</name>
</gene>
<proteinExistence type="inferred from homology"/>
<comment type="catalytic activity">
    <reaction evidence="1">
        <text>aldehydo-D-galactose 6-phosphate = keto-D-tagatose 6-phosphate</text>
        <dbReference type="Rhea" id="RHEA:13033"/>
        <dbReference type="ChEBI" id="CHEBI:58255"/>
        <dbReference type="ChEBI" id="CHEBI:134283"/>
        <dbReference type="EC" id="5.3.1.26"/>
    </reaction>
</comment>
<comment type="pathway">
    <text evidence="1">Carbohydrate metabolism; D-galactose 6-phosphate degradation; D-tagatose 6-phosphate from D-galactose 6-phosphate: step 1/1.</text>
</comment>
<comment type="subunit">
    <text evidence="1">Heteromultimeric protein consisting of LacA and LacB.</text>
</comment>
<comment type="similarity">
    <text evidence="1">Belongs to the LacAB/RpiB family.</text>
</comment>
<reference key="1">
    <citation type="journal article" date="2002" name="Proc. Natl. Acad. Sci. U.S.A.">
        <title>Genome sequence of a serotype M3 strain of group A Streptococcus: phage-encoded toxins, the high-virulence phenotype, and clone emergence.</title>
        <authorList>
            <person name="Beres S.B."/>
            <person name="Sylva G.L."/>
            <person name="Barbian K.D."/>
            <person name="Lei B."/>
            <person name="Hoff J.S."/>
            <person name="Mammarella N.D."/>
            <person name="Liu M.-Y."/>
            <person name="Smoot J.C."/>
            <person name="Porcella S.F."/>
            <person name="Parkins L.D."/>
            <person name="Campbell D.S."/>
            <person name="Smith T.M."/>
            <person name="McCormick J.K."/>
            <person name="Leung D.Y.M."/>
            <person name="Schlievert P.M."/>
            <person name="Musser J.M."/>
        </authorList>
    </citation>
    <scope>NUCLEOTIDE SEQUENCE [LARGE SCALE GENOMIC DNA]</scope>
    <source>
        <strain>ATCC BAA-595 / MGAS315</strain>
    </source>
</reference>
<sequence>MKIAVGCDHIVTYEKIAVVDYLKTQGHEIIDCGTYDNVRTHYPIFGKKVGEAVASGEAELGVVICGTGVGITNAVNKVPGIRSALVRDMTSAIYSKEELNANVIGFGGKIIGGLLMNDIIDAFLAAEYKPTEENKKWIEKMDSLQHASQDQNNPHFFDEFLEKWDRGEYHD</sequence>
<keyword id="KW-0413">Isomerase</keyword>
<keyword id="KW-0423">Lactose metabolism</keyword>
<protein>
    <recommendedName>
        <fullName evidence="1">Galactose-6-phosphate isomerase subunit LacB 2</fullName>
        <ecNumber evidence="1">5.3.1.26</ecNumber>
    </recommendedName>
</protein>